<proteinExistence type="evidence at protein level"/>
<name>FINC_RAT</name>
<dbReference type="EMBL" id="X15906">
    <property type="protein sequence ID" value="CAA34020.1"/>
    <property type="molecule type" value="mRNA"/>
</dbReference>
<dbReference type="EMBL" id="L29191">
    <property type="protein sequence ID" value="AAA41166.1"/>
    <property type="molecule type" value="Genomic_DNA"/>
</dbReference>
<dbReference type="EMBL" id="L00191">
    <property type="protein sequence ID" value="AAA41166.1"/>
    <property type="status" value="JOINED"/>
    <property type="molecule type" value="Genomic_DNA"/>
</dbReference>
<dbReference type="EMBL" id="L29191">
    <property type="protein sequence ID" value="AAA41167.1"/>
    <property type="molecule type" value="Genomic_DNA"/>
</dbReference>
<dbReference type="EMBL" id="L00191">
    <property type="protein sequence ID" value="AAA41167.1"/>
    <property type="status" value="JOINED"/>
    <property type="molecule type" value="Genomic_DNA"/>
</dbReference>
<dbReference type="EMBL" id="L29191">
    <property type="protein sequence ID" value="AAA41168.1"/>
    <property type="molecule type" value="Genomic_DNA"/>
</dbReference>
<dbReference type="EMBL" id="L00191">
    <property type="protein sequence ID" value="AAA41168.1"/>
    <property type="status" value="JOINED"/>
    <property type="molecule type" value="Genomic_DNA"/>
</dbReference>
<dbReference type="EMBL" id="M11750">
    <property type="protein sequence ID" value="AAA41170.1"/>
    <property type="molecule type" value="Genomic_DNA"/>
</dbReference>
<dbReference type="EMBL" id="X05831">
    <property type="protein sequence ID" value="CAA29278.1"/>
    <property type="molecule type" value="Genomic_DNA"/>
</dbReference>
<dbReference type="EMBL" id="X05832">
    <property type="protein sequence ID" value="CAA29279.1"/>
    <property type="molecule type" value="Genomic_DNA"/>
</dbReference>
<dbReference type="EMBL" id="X05833">
    <property type="protein sequence ID" value="CAA29280.1"/>
    <property type="molecule type" value="Genomic_DNA"/>
</dbReference>
<dbReference type="EMBL" id="X05834">
    <property type="protein sequence ID" value="CAA29281.1"/>
    <property type="molecule type" value="Genomic_DNA"/>
</dbReference>
<dbReference type="PIR" id="S14428">
    <property type="entry name" value="S14428"/>
</dbReference>
<dbReference type="SMR" id="P04937"/>
<dbReference type="FunCoup" id="P04937">
    <property type="interactions" value="533"/>
</dbReference>
<dbReference type="IntAct" id="P04937">
    <property type="interactions" value="3"/>
</dbReference>
<dbReference type="MINT" id="P04937"/>
<dbReference type="STRING" id="10116.ENSRNOP00000019772"/>
<dbReference type="CarbonylDB" id="P04937"/>
<dbReference type="GlyCosmos" id="P04937">
    <property type="glycosylation" value="9 sites, No reported glycans"/>
</dbReference>
<dbReference type="GlyGen" id="P04937">
    <property type="glycosylation" value="13 sites, 1 O-linked glycan (1 site)"/>
</dbReference>
<dbReference type="iPTMnet" id="P04937"/>
<dbReference type="PhosphoSitePlus" id="P04937"/>
<dbReference type="jPOST" id="P04937"/>
<dbReference type="PaxDb" id="10116-ENSRNOP00000019772"/>
<dbReference type="PeptideAtlas" id="P04937"/>
<dbReference type="ABCD" id="P04937">
    <property type="antibodies" value="2 sequenced antibodies"/>
</dbReference>
<dbReference type="UCSC" id="RGD:2624">
    <molecule id="P04937-1"/>
    <property type="organism name" value="rat"/>
</dbReference>
<dbReference type="AGR" id="RGD:2624"/>
<dbReference type="RGD" id="2624">
    <property type="gene designation" value="Fn1"/>
</dbReference>
<dbReference type="eggNOG" id="ENOG502QPTS">
    <property type="taxonomic scope" value="Eukaryota"/>
</dbReference>
<dbReference type="InParanoid" id="P04937"/>
<dbReference type="PhylomeDB" id="P04937"/>
<dbReference type="Reactome" id="R-RNO-114608">
    <property type="pathway name" value="Platelet degranulation"/>
</dbReference>
<dbReference type="Reactome" id="R-RNO-1474228">
    <property type="pathway name" value="Degradation of the extracellular matrix"/>
</dbReference>
<dbReference type="Reactome" id="R-RNO-1474244">
    <property type="pathway name" value="Extracellular matrix organization"/>
</dbReference>
<dbReference type="Reactome" id="R-RNO-1566977">
    <property type="pathway name" value="Fibronectin matrix formation"/>
</dbReference>
<dbReference type="Reactome" id="R-RNO-202733">
    <property type="pathway name" value="Cell surface interactions at the vascular wall"/>
</dbReference>
<dbReference type="Reactome" id="R-RNO-2129379">
    <property type="pathway name" value="Molecules associated with elastic fibres"/>
</dbReference>
<dbReference type="Reactome" id="R-RNO-216083">
    <property type="pathway name" value="Integrin cell surface interactions"/>
</dbReference>
<dbReference type="Reactome" id="R-RNO-3000170">
    <property type="pathway name" value="Syndecan interactions"/>
</dbReference>
<dbReference type="Reactome" id="R-RNO-3000178">
    <property type="pathway name" value="ECM proteoglycans"/>
</dbReference>
<dbReference type="Reactome" id="R-RNO-354192">
    <property type="pathway name" value="Integrin signaling"/>
</dbReference>
<dbReference type="Reactome" id="R-RNO-354194">
    <property type="pathway name" value="GRB2:SOS provides linkage to MAPK signaling for Integrins"/>
</dbReference>
<dbReference type="Reactome" id="R-RNO-372708">
    <property type="pathway name" value="p130Cas linkage to MAPK signaling for integrins"/>
</dbReference>
<dbReference type="Reactome" id="R-RNO-381426">
    <property type="pathway name" value="Regulation of Insulin-like Growth Factor (IGF) transport and uptake by Insulin-like Growth Factor Binding Proteins (IGFBPs)"/>
</dbReference>
<dbReference type="Reactome" id="R-RNO-5674135">
    <property type="pathway name" value="MAP2K and MAPK activation"/>
</dbReference>
<dbReference type="Reactome" id="R-RNO-8874081">
    <property type="pathway name" value="MET activates PTK2 signaling"/>
</dbReference>
<dbReference type="Reactome" id="R-RNO-8957275">
    <property type="pathway name" value="Post-translational protein phosphorylation"/>
</dbReference>
<dbReference type="Reactome" id="R-RNO-9634597">
    <property type="pathway name" value="GPER1 signaling"/>
</dbReference>
<dbReference type="Reactome" id="R-RNO-9860927">
    <property type="pathway name" value="Turbulent (oscillatory, disturbed) flow shear stress activates signaling by PIEZO1 and integrins in endothelial cells"/>
</dbReference>
<dbReference type="PRO" id="PR:P04937"/>
<dbReference type="Proteomes" id="UP000002494">
    <property type="component" value="Unplaced"/>
</dbReference>
<dbReference type="GO" id="GO:0016324">
    <property type="term" value="C:apical plasma membrane"/>
    <property type="evidence" value="ECO:0000266"/>
    <property type="project" value="RGD"/>
</dbReference>
<dbReference type="GO" id="GO:0005604">
    <property type="term" value="C:basement membrane"/>
    <property type="evidence" value="ECO:0000314"/>
    <property type="project" value="RGD"/>
</dbReference>
<dbReference type="GO" id="GO:0005793">
    <property type="term" value="C:endoplasmic reticulum-Golgi intermediate compartment"/>
    <property type="evidence" value="ECO:0000266"/>
    <property type="project" value="RGD"/>
</dbReference>
<dbReference type="GO" id="GO:0070062">
    <property type="term" value="C:extracellular exosome"/>
    <property type="evidence" value="ECO:0000266"/>
    <property type="project" value="RGD"/>
</dbReference>
<dbReference type="GO" id="GO:0031012">
    <property type="term" value="C:extracellular matrix"/>
    <property type="evidence" value="ECO:0000266"/>
    <property type="project" value="RGD"/>
</dbReference>
<dbReference type="GO" id="GO:0005615">
    <property type="term" value="C:extracellular space"/>
    <property type="evidence" value="ECO:0000314"/>
    <property type="project" value="RGD"/>
</dbReference>
<dbReference type="GO" id="GO:0005577">
    <property type="term" value="C:fibrinogen complex"/>
    <property type="evidence" value="ECO:0000266"/>
    <property type="project" value="RGD"/>
</dbReference>
<dbReference type="GO" id="GO:0005201">
    <property type="term" value="F:extracellular matrix structural constituent"/>
    <property type="evidence" value="ECO:0000304"/>
    <property type="project" value="RGD"/>
</dbReference>
<dbReference type="GO" id="GO:0008201">
    <property type="term" value="F:heparin binding"/>
    <property type="evidence" value="ECO:0007669"/>
    <property type="project" value="UniProtKB-KW"/>
</dbReference>
<dbReference type="GO" id="GO:0042802">
    <property type="term" value="F:identical protein binding"/>
    <property type="evidence" value="ECO:0000266"/>
    <property type="project" value="RGD"/>
</dbReference>
<dbReference type="GO" id="GO:0005178">
    <property type="term" value="F:integrin binding"/>
    <property type="evidence" value="ECO:0000266"/>
    <property type="project" value="RGD"/>
</dbReference>
<dbReference type="GO" id="GO:0045340">
    <property type="term" value="F:mercury ion binding"/>
    <property type="evidence" value="ECO:0000314"/>
    <property type="project" value="RGD"/>
</dbReference>
<dbReference type="GO" id="GO:0016504">
    <property type="term" value="F:peptidase activator activity"/>
    <property type="evidence" value="ECO:0000266"/>
    <property type="project" value="RGD"/>
</dbReference>
<dbReference type="GO" id="GO:0002020">
    <property type="term" value="F:protease binding"/>
    <property type="evidence" value="ECO:0000353"/>
    <property type="project" value="RGD"/>
</dbReference>
<dbReference type="GO" id="GO:0043394">
    <property type="term" value="F:proteoglycan binding"/>
    <property type="evidence" value="ECO:0000266"/>
    <property type="project" value="RGD"/>
</dbReference>
<dbReference type="GO" id="GO:0048018">
    <property type="term" value="F:receptor ligand activity"/>
    <property type="evidence" value="ECO:0000266"/>
    <property type="project" value="RGD"/>
</dbReference>
<dbReference type="GO" id="GO:0005102">
    <property type="term" value="F:signaling receptor binding"/>
    <property type="evidence" value="ECO:0000266"/>
    <property type="project" value="RGD"/>
</dbReference>
<dbReference type="GO" id="GO:0006953">
    <property type="term" value="P:acute-phase response"/>
    <property type="evidence" value="ECO:0007669"/>
    <property type="project" value="UniProtKB-KW"/>
</dbReference>
<dbReference type="GO" id="GO:0001525">
    <property type="term" value="P:angiogenesis"/>
    <property type="evidence" value="ECO:0007669"/>
    <property type="project" value="UniProtKB-KW"/>
</dbReference>
<dbReference type="GO" id="GO:0007161">
    <property type="term" value="P:calcium-independent cell-matrix adhesion"/>
    <property type="evidence" value="ECO:0000266"/>
    <property type="project" value="RGD"/>
</dbReference>
<dbReference type="GO" id="GO:0007155">
    <property type="term" value="P:cell adhesion"/>
    <property type="evidence" value="ECO:0000266"/>
    <property type="project" value="RGD"/>
</dbReference>
<dbReference type="GO" id="GO:0007160">
    <property type="term" value="P:cell-matrix adhesion"/>
    <property type="evidence" value="ECO:0000315"/>
    <property type="project" value="RGD"/>
</dbReference>
<dbReference type="GO" id="GO:0007044">
    <property type="term" value="P:cell-substrate junction assembly"/>
    <property type="evidence" value="ECO:0000266"/>
    <property type="project" value="RGD"/>
</dbReference>
<dbReference type="GO" id="GO:1904646">
    <property type="term" value="P:cellular response to amyloid-beta"/>
    <property type="evidence" value="ECO:0000270"/>
    <property type="project" value="RGD"/>
</dbReference>
<dbReference type="GO" id="GO:1904385">
    <property type="term" value="P:cellular response to angiotensin"/>
    <property type="evidence" value="ECO:0000270"/>
    <property type="project" value="RGD"/>
</dbReference>
<dbReference type="GO" id="GO:0071773">
    <property type="term" value="P:cellular response to BMP stimulus"/>
    <property type="evidence" value="ECO:0000270"/>
    <property type="project" value="RGD"/>
</dbReference>
<dbReference type="GO" id="GO:0071333">
    <property type="term" value="P:cellular response to glucose stimulus"/>
    <property type="evidence" value="ECO:0000270"/>
    <property type="project" value="RGD"/>
</dbReference>
<dbReference type="GO" id="GO:0071347">
    <property type="term" value="P:cellular response to interleukin-1"/>
    <property type="evidence" value="ECO:0000315"/>
    <property type="project" value="RGD"/>
</dbReference>
<dbReference type="GO" id="GO:0071222">
    <property type="term" value="P:cellular response to lipopolysaccharide"/>
    <property type="evidence" value="ECO:0000270"/>
    <property type="project" value="RGD"/>
</dbReference>
<dbReference type="GO" id="GO:0071288">
    <property type="term" value="P:cellular response to mercury ion"/>
    <property type="evidence" value="ECO:0000314"/>
    <property type="project" value="RGD"/>
</dbReference>
<dbReference type="GO" id="GO:0036120">
    <property type="term" value="P:cellular response to platelet-derived growth factor stimulus"/>
    <property type="evidence" value="ECO:0000270"/>
    <property type="project" value="RGD"/>
</dbReference>
<dbReference type="GO" id="GO:0071380">
    <property type="term" value="P:cellular response to prostaglandin E stimulus"/>
    <property type="evidence" value="ECO:0000270"/>
    <property type="project" value="RGD"/>
</dbReference>
<dbReference type="GO" id="GO:0071560">
    <property type="term" value="P:cellular response to transforming growth factor beta stimulus"/>
    <property type="evidence" value="ECO:0000270"/>
    <property type="project" value="RGD"/>
</dbReference>
<dbReference type="GO" id="GO:0035924">
    <property type="term" value="P:cellular response to vascular endothelial growth factor stimulus"/>
    <property type="evidence" value="ECO:0000270"/>
    <property type="project" value="RGD"/>
</dbReference>
<dbReference type="GO" id="GO:0035987">
    <property type="term" value="P:endodermal cell differentiation"/>
    <property type="evidence" value="ECO:0000266"/>
    <property type="project" value="RGD"/>
</dbReference>
<dbReference type="GO" id="GO:0043542">
    <property type="term" value="P:endothelial cell migration"/>
    <property type="evidence" value="ECO:0000266"/>
    <property type="project" value="RGD"/>
</dbReference>
<dbReference type="GO" id="GO:0030198">
    <property type="term" value="P:extracellular matrix organization"/>
    <property type="evidence" value="ECO:0000315"/>
    <property type="project" value="RGD"/>
</dbReference>
<dbReference type="GO" id="GO:0008347">
    <property type="term" value="P:glial cell migration"/>
    <property type="evidence" value="ECO:0000314"/>
    <property type="project" value="RGD"/>
</dbReference>
<dbReference type="GO" id="GO:0007507">
    <property type="term" value="P:heart development"/>
    <property type="evidence" value="ECO:0000318"/>
    <property type="project" value="GO_Central"/>
</dbReference>
<dbReference type="GO" id="GO:0033622">
    <property type="term" value="P:integrin activation"/>
    <property type="evidence" value="ECO:0000266"/>
    <property type="project" value="RGD"/>
</dbReference>
<dbReference type="GO" id="GO:0007229">
    <property type="term" value="P:integrin-mediated signaling pathway"/>
    <property type="evidence" value="ECO:0000266"/>
    <property type="project" value="RGD"/>
</dbReference>
<dbReference type="GO" id="GO:0043066">
    <property type="term" value="P:negative regulation of apoptotic process"/>
    <property type="evidence" value="ECO:0000315"/>
    <property type="project" value="RGD"/>
</dbReference>
<dbReference type="GO" id="GO:0032966">
    <property type="term" value="P:negative regulation of collagen biosynthetic process"/>
    <property type="evidence" value="ECO:0000315"/>
    <property type="project" value="RGD"/>
</dbReference>
<dbReference type="GO" id="GO:0150102">
    <property type="term" value="P:negative regulation of monocyte activation"/>
    <property type="evidence" value="ECO:0000266"/>
    <property type="project" value="RGD"/>
</dbReference>
<dbReference type="GO" id="GO:0071635">
    <property type="term" value="P:negative regulation of transforming growth factor beta production"/>
    <property type="evidence" value="ECO:0000266"/>
    <property type="project" value="RGD"/>
</dbReference>
<dbReference type="GO" id="GO:0007399">
    <property type="term" value="P:nervous system development"/>
    <property type="evidence" value="ECO:0000318"/>
    <property type="project" value="GO_Central"/>
</dbReference>
<dbReference type="GO" id="GO:1901166">
    <property type="term" value="P:neural crest cell migration involved in autonomic nervous system development"/>
    <property type="evidence" value="ECO:0000266"/>
    <property type="project" value="RGD"/>
</dbReference>
<dbReference type="GO" id="GO:0001503">
    <property type="term" value="P:ossification"/>
    <property type="evidence" value="ECO:0000304"/>
    <property type="project" value="RGD"/>
</dbReference>
<dbReference type="GO" id="GO:0045773">
    <property type="term" value="P:positive regulation of axon extension"/>
    <property type="evidence" value="ECO:0000266"/>
    <property type="project" value="RGD"/>
</dbReference>
<dbReference type="GO" id="GO:0030335">
    <property type="term" value="P:positive regulation of cell migration"/>
    <property type="evidence" value="ECO:0000315"/>
    <property type="project" value="RGD"/>
</dbReference>
<dbReference type="GO" id="GO:0008284">
    <property type="term" value="P:positive regulation of cell population proliferation"/>
    <property type="evidence" value="ECO:0000266"/>
    <property type="project" value="RGD"/>
</dbReference>
<dbReference type="GO" id="GO:0050921">
    <property type="term" value="P:positive regulation of chemotaxis"/>
    <property type="evidence" value="ECO:0000314"/>
    <property type="project" value="RGD"/>
</dbReference>
<dbReference type="GO" id="GO:0048146">
    <property type="term" value="P:positive regulation of fibroblast proliferation"/>
    <property type="evidence" value="ECO:0000266"/>
    <property type="project" value="RGD"/>
</dbReference>
<dbReference type="GO" id="GO:0010628">
    <property type="term" value="P:positive regulation of gene expression"/>
    <property type="evidence" value="ECO:0000266"/>
    <property type="project" value="RGD"/>
</dbReference>
<dbReference type="GO" id="GO:0051897">
    <property type="term" value="P:positive regulation of phosphatidylinositol 3-kinase/protein kinase B signal transduction"/>
    <property type="evidence" value="ECO:0000266"/>
    <property type="project" value="RGD"/>
</dbReference>
<dbReference type="GO" id="GO:1904237">
    <property type="term" value="P:positive regulation of substrate-dependent cell migration, cell attachment to substrate"/>
    <property type="evidence" value="ECO:0000266"/>
    <property type="project" value="RGD"/>
</dbReference>
<dbReference type="GO" id="GO:0008360">
    <property type="term" value="P:regulation of cell shape"/>
    <property type="evidence" value="ECO:0007669"/>
    <property type="project" value="UniProtKB-KW"/>
</dbReference>
<dbReference type="GO" id="GO:0070372">
    <property type="term" value="P:regulation of ERK1 and ERK2 cascade"/>
    <property type="evidence" value="ECO:0000266"/>
    <property type="project" value="RGD"/>
</dbReference>
<dbReference type="GO" id="GO:0014823">
    <property type="term" value="P:response to activity"/>
    <property type="evidence" value="ECO:0000270"/>
    <property type="project" value="RGD"/>
</dbReference>
<dbReference type="GO" id="GO:0045471">
    <property type="term" value="P:response to ethanol"/>
    <property type="evidence" value="ECO:0000270"/>
    <property type="project" value="RGD"/>
</dbReference>
<dbReference type="GO" id="GO:0051384">
    <property type="term" value="P:response to glucocorticoid"/>
    <property type="evidence" value="ECO:0000270"/>
    <property type="project" value="RGD"/>
</dbReference>
<dbReference type="GO" id="GO:0010039">
    <property type="term" value="P:response to iron ion"/>
    <property type="evidence" value="ECO:0000270"/>
    <property type="project" value="RGD"/>
</dbReference>
<dbReference type="GO" id="GO:0002931">
    <property type="term" value="P:response to ischemia"/>
    <property type="evidence" value="ECO:0000270"/>
    <property type="project" value="RGD"/>
</dbReference>
<dbReference type="GO" id="GO:0014850">
    <property type="term" value="P:response to muscle activity"/>
    <property type="evidence" value="ECO:0000266"/>
    <property type="project" value="RGD"/>
</dbReference>
<dbReference type="GO" id="GO:0010193">
    <property type="term" value="P:response to ozone"/>
    <property type="evidence" value="ECO:0000270"/>
    <property type="project" value="RGD"/>
</dbReference>
<dbReference type="GO" id="GO:0009410">
    <property type="term" value="P:response to xenobiotic stimulus"/>
    <property type="evidence" value="ECO:0000270"/>
    <property type="project" value="RGD"/>
</dbReference>
<dbReference type="GO" id="GO:0034446">
    <property type="term" value="P:substrate adhesion-dependent cell spreading"/>
    <property type="evidence" value="ECO:0000266"/>
    <property type="project" value="RGD"/>
</dbReference>
<dbReference type="GO" id="GO:0042060">
    <property type="term" value="P:wound healing"/>
    <property type="evidence" value="ECO:0000266"/>
    <property type="project" value="RGD"/>
</dbReference>
<dbReference type="CDD" id="cd00061">
    <property type="entry name" value="FN1"/>
    <property type="match status" value="12"/>
</dbReference>
<dbReference type="CDD" id="cd00062">
    <property type="entry name" value="FN2"/>
    <property type="match status" value="2"/>
</dbReference>
<dbReference type="CDD" id="cd00063">
    <property type="entry name" value="FN3"/>
    <property type="match status" value="17"/>
</dbReference>
<dbReference type="FunFam" id="2.10.70.10:FF:000004">
    <property type="entry name" value="Fibronectin 1"/>
    <property type="match status" value="1"/>
</dbReference>
<dbReference type="FunFam" id="2.10.70.10:FF:000006">
    <property type="entry name" value="Fibronectin 1"/>
    <property type="match status" value="3"/>
</dbReference>
<dbReference type="FunFam" id="2.10.70.10:FF:000007">
    <property type="entry name" value="Fibronectin 1"/>
    <property type="match status" value="2"/>
</dbReference>
<dbReference type="FunFam" id="2.10.70.10:FF:000018">
    <property type="entry name" value="Fibronectin 1"/>
    <property type="match status" value="1"/>
</dbReference>
<dbReference type="FunFam" id="2.10.70.10:FF:000027">
    <property type="entry name" value="Fibronectin 1"/>
    <property type="match status" value="1"/>
</dbReference>
<dbReference type="FunFam" id="2.60.40.10:FF:000099">
    <property type="entry name" value="Fibronectin 1"/>
    <property type="match status" value="3"/>
</dbReference>
<dbReference type="FunFam" id="2.60.40.10:FF:000417">
    <property type="entry name" value="Fibronectin 1"/>
    <property type="match status" value="1"/>
</dbReference>
<dbReference type="FunFam" id="2.60.40.10:FF:000579">
    <property type="entry name" value="Fibronectin 1"/>
    <property type="match status" value="1"/>
</dbReference>
<dbReference type="FunFam" id="2.60.40.10:FF:000622">
    <property type="entry name" value="Fibronectin 1"/>
    <property type="match status" value="1"/>
</dbReference>
<dbReference type="FunFam" id="2.60.40.10:FF:001069">
    <property type="entry name" value="Fibronectin 1"/>
    <property type="match status" value="1"/>
</dbReference>
<dbReference type="FunFam" id="2.10.10.10:FF:000001">
    <property type="entry name" value="Fibronectin 1a isoform 1"/>
    <property type="match status" value="2"/>
</dbReference>
<dbReference type="FunFam" id="2.10.70.10:FF:000017">
    <property type="entry name" value="Fibronectin isoform X1"/>
    <property type="match status" value="1"/>
</dbReference>
<dbReference type="FunFam" id="2.60.40.10:FF:000227">
    <property type="entry name" value="Fibronectin isoform X1"/>
    <property type="match status" value="1"/>
</dbReference>
<dbReference type="FunFam" id="2.10.70.10:FF:000020">
    <property type="entry name" value="fibronectin isoform X1"/>
    <property type="match status" value="1"/>
</dbReference>
<dbReference type="FunFam" id="2.10.70.10:FF:000021">
    <property type="entry name" value="fibronectin isoform X1"/>
    <property type="match status" value="1"/>
</dbReference>
<dbReference type="FunFam" id="2.10.70.10:FF:000022">
    <property type="entry name" value="fibronectin isoform X1"/>
    <property type="match status" value="1"/>
</dbReference>
<dbReference type="FunFam" id="2.60.40.10:FF:000275">
    <property type="entry name" value="fibronectin isoform X1"/>
    <property type="match status" value="1"/>
</dbReference>
<dbReference type="FunFam" id="2.60.40.10:FF:000300">
    <property type="entry name" value="fibronectin isoform X1"/>
    <property type="match status" value="1"/>
</dbReference>
<dbReference type="FunFam" id="2.60.40.10:FF:000306">
    <property type="entry name" value="fibronectin isoform X1"/>
    <property type="match status" value="1"/>
</dbReference>
<dbReference type="FunFam" id="2.60.40.10:FF:000317">
    <property type="entry name" value="fibronectin isoform X1"/>
    <property type="match status" value="1"/>
</dbReference>
<dbReference type="FunFam" id="2.60.40.10:FF:000336">
    <property type="entry name" value="fibronectin isoform X1"/>
    <property type="match status" value="1"/>
</dbReference>
<dbReference type="FunFam" id="2.60.40.10:FF:000364">
    <property type="entry name" value="fibronectin isoform X1"/>
    <property type="match status" value="1"/>
</dbReference>
<dbReference type="FunFam" id="2.60.40.10:FF:000382">
    <property type="entry name" value="fibronectin isoform X1"/>
    <property type="match status" value="1"/>
</dbReference>
<dbReference type="FunFam" id="2.60.40.10:FF:000447">
    <property type="entry name" value="fibronectin isoform X1"/>
    <property type="match status" value="1"/>
</dbReference>
<dbReference type="FunFam" id="2.60.40.10:FF:000433">
    <property type="entry name" value="fibronectin isoform X5"/>
    <property type="match status" value="1"/>
</dbReference>
<dbReference type="Gene3D" id="2.10.70.10">
    <property type="entry name" value="Complement Module, domain 1"/>
    <property type="match status" value="12"/>
</dbReference>
<dbReference type="Gene3D" id="2.10.10.10">
    <property type="entry name" value="Fibronectin, type II, collagen-binding"/>
    <property type="match status" value="2"/>
</dbReference>
<dbReference type="Gene3D" id="2.60.40.10">
    <property type="entry name" value="Immunoglobulins"/>
    <property type="match status" value="17"/>
</dbReference>
<dbReference type="InterPro" id="IPR050991">
    <property type="entry name" value="ECM_Regulatory_Proteins"/>
</dbReference>
<dbReference type="InterPro" id="IPR000083">
    <property type="entry name" value="Fibronectin_type1"/>
</dbReference>
<dbReference type="InterPro" id="IPR003961">
    <property type="entry name" value="FN3_dom"/>
</dbReference>
<dbReference type="InterPro" id="IPR036116">
    <property type="entry name" value="FN3_sf"/>
</dbReference>
<dbReference type="InterPro" id="IPR000562">
    <property type="entry name" value="FN_type2_dom"/>
</dbReference>
<dbReference type="InterPro" id="IPR036943">
    <property type="entry name" value="FN_type2_sf"/>
</dbReference>
<dbReference type="InterPro" id="IPR013783">
    <property type="entry name" value="Ig-like_fold"/>
</dbReference>
<dbReference type="InterPro" id="IPR013806">
    <property type="entry name" value="Kringle-like"/>
</dbReference>
<dbReference type="PANTHER" id="PTHR46708:SF8">
    <property type="entry name" value="FIBRONECTIN"/>
    <property type="match status" value="1"/>
</dbReference>
<dbReference type="PANTHER" id="PTHR46708">
    <property type="entry name" value="TENASCIN"/>
    <property type="match status" value="1"/>
</dbReference>
<dbReference type="Pfam" id="PF00039">
    <property type="entry name" value="fn1"/>
    <property type="match status" value="11"/>
</dbReference>
<dbReference type="Pfam" id="PF00040">
    <property type="entry name" value="fn2"/>
    <property type="match status" value="2"/>
</dbReference>
<dbReference type="Pfam" id="PF00041">
    <property type="entry name" value="fn3"/>
    <property type="match status" value="17"/>
</dbReference>
<dbReference type="PRINTS" id="PR00013">
    <property type="entry name" value="FNTYPEII"/>
</dbReference>
<dbReference type="SMART" id="SM00058">
    <property type="entry name" value="FN1"/>
    <property type="match status" value="12"/>
</dbReference>
<dbReference type="SMART" id="SM00059">
    <property type="entry name" value="FN2"/>
    <property type="match status" value="2"/>
</dbReference>
<dbReference type="SMART" id="SM00060">
    <property type="entry name" value="FN3"/>
    <property type="match status" value="17"/>
</dbReference>
<dbReference type="SUPFAM" id="SSF49265">
    <property type="entry name" value="Fibronectin type III"/>
    <property type="match status" value="11"/>
</dbReference>
<dbReference type="SUPFAM" id="SSF57603">
    <property type="entry name" value="FnI-like domain"/>
    <property type="match status" value="12"/>
</dbReference>
<dbReference type="SUPFAM" id="SSF57440">
    <property type="entry name" value="Kringle-like"/>
    <property type="match status" value="2"/>
</dbReference>
<dbReference type="PROSITE" id="PS00022">
    <property type="entry name" value="EGF_1"/>
    <property type="match status" value="2"/>
</dbReference>
<dbReference type="PROSITE" id="PS01253">
    <property type="entry name" value="FN1_1"/>
    <property type="match status" value="12"/>
</dbReference>
<dbReference type="PROSITE" id="PS51091">
    <property type="entry name" value="FN1_2"/>
    <property type="match status" value="12"/>
</dbReference>
<dbReference type="PROSITE" id="PS00023">
    <property type="entry name" value="FN2_1"/>
    <property type="match status" value="2"/>
</dbReference>
<dbReference type="PROSITE" id="PS51092">
    <property type="entry name" value="FN2_2"/>
    <property type="match status" value="2"/>
</dbReference>
<dbReference type="PROSITE" id="PS50853">
    <property type="entry name" value="FN3"/>
    <property type="match status" value="17"/>
</dbReference>
<protein>
    <recommendedName>
        <fullName evidence="11">Fibronectin</fullName>
        <shortName>FN</shortName>
    </recommendedName>
    <component>
        <recommendedName>
            <fullName>Anastellin</fullName>
        </recommendedName>
    </component>
</protein>
<accession>P04937</accession>
<accession>Q6LDX9</accession>
<keyword id="KW-0011">Acute phase</keyword>
<keyword id="KW-0025">Alternative splicing</keyword>
<keyword id="KW-0037">Angiogenesis</keyword>
<keyword id="KW-0130">Cell adhesion</keyword>
<keyword id="KW-0133">Cell shape</keyword>
<keyword id="KW-0903">Direct protein sequencing</keyword>
<keyword id="KW-1015">Disulfide bond</keyword>
<keyword id="KW-0272">Extracellular matrix</keyword>
<keyword id="KW-0325">Glycoprotein</keyword>
<keyword id="KW-0358">Heparin-binding</keyword>
<keyword id="KW-1017">Isopeptide bond</keyword>
<keyword id="KW-0558">Oxidation</keyword>
<keyword id="KW-0597">Phosphoprotein</keyword>
<keyword id="KW-1185">Reference proteome</keyword>
<keyword id="KW-0677">Repeat</keyword>
<keyword id="KW-0964">Secreted</keyword>
<keyword id="KW-0732">Signal</keyword>
<keyword id="KW-0765">Sulfation</keyword>
<sequence length="2477" mass="272511">MLRGPGPGRLLLLAVLCLGTSVRCTETGKSKRQAQQIVQPPSPVAVSQSKPGCFDNGKHYQINQQWERTYLGNALVCTCYGGSRGFNCESKPEPEETCFDKYTGNTYKVGDTYERPKDSMIWDCTCIGAGRGRISCTIANRCHEGGQSYKIGDKWRRPHETGGYMLECLCLGNGKGEWTCKPIAEKCFDHAAGTSYVVGETWEKPYQGWMMVDCTCLGEGNGRITCTSRNRCNDQDTRTSYRIGDTWSKKDNRGNLLQCVCTGNGRGEWKCERHVLQSASAGSGSFTDVRTAIYQPQTHPQPAPYGHCVTDSGVVYSVGMQWLKSQGDKQMLCTCLGNGVSCQETAVTQTYGGNSNGEPCVLPFHYNGRTFYSCTTEGRQDGHLWCSTTSNYEQDQKYSFCTDHAVLVQTRGGNSNGALCHFPFLYSNRNYSDCTSEGRRDNMKWCGTTQNYDADQKFGFCPMAAHEEICTTNEGVMYRIGDQWDKQHDLGHMMRCTCVGNGRGQWACIPYSQLRDQCIVDDITYNVNDTFHKRHEEGHMLNCTCFGQGRGRWKCDPIDRCQDSETRTFYQIGDSWEKFVHGVRYQCYCYGRGIGEWHCQPLQTYPGTTGPVQVIITETPSQPNSHPIQWNAPEPSHITKYILRWRPKTSTGRWKEATIPGHLNSYTIKGLTPGVIYEGQLISIQQYGHQEVTRFDFTTSASTPVTSNTVTGETAPFSPVVATSESVTEITASSFVVSWVSASDTVSGFRVEYELSEEGDEPQYLDLPSTATSVNIPDLLPGRKYIVNVYQISEEGKQSLILSTSQTTAPDAPPDPTVDQVDDTSIVVRWSRPQAPITGYRIVYSPSVEGSSTELNLPETANSVTLSDLQPGVQYNITIYAVEENQESTPVFIQQETTGVPRSDDVPAPKDLQFVEVTDVKVTIMWTPPNSAVTGYRVDVLPVNLPGEHGQRLPVNRNTFAEVTGLSPGVTYLFKVFAVHQGRESKPLTAQQTTKLDAPTNLQFVNETDRTVLVTWTPPRARIAGYRLTVGLTRGGQPKQYNVGPMASKYPLRNLQPGSEYTVTLMAVKGNQQSPKATGVFTTLQPLRSIPPYNTEVTETTIVITWTPAPRIGFKLGVRPSQGGEAPREVTSDSGSIVVSGLTPGVEYTYTIQVLRDGQERDAPIVNRVVTPLSPPTNLHLEANPDTGVLTVSWERSTTPDITGYRITTTPTNGQQGTALEEVVHADQSSCTFENRNPGLEYNVSVYTVKDDKESAPISDTVIPEVPQLTDLSFVDITDSSIGLRWTPLNSSTIIGYRITVVAAGEGIPIFEDFVDSSVGYYTVTGLEPGIDYDISVITLINGGESAPTTLTQQTAVPPPTDLRFTNIGPDTMRVTWAPPPSIELTNLLVRYSPVKNEEDVAELSISPSDNAVVLTNLLPGTEYLVSVSSVYEQHESIPLRGRQKTGLDSPTGFDSSDVTANSFTVHWVAPRAPITGYIIRHHAEHSAGRPRQDRVPPSRNSITLTNLNPGTEYIVTIIAVNGREESPPLIGQQSTVSDVPRDLEVIASTPTSLLISWEPPAVSVRYYRITYGETGGNSPVQEFTVPGSKSTATINNIKPGADYTITLYAVTGRGDSPASSKPVSINYQTEIDKPSQMQVTDVQDNSISVRWLPSTSPVTGYRVTTAPKNGLGPTKSQTVSPDQTEMTIEGLQPTVEYVVSVYAQNRNGESQPLVQTAVTNIDRPKGLAFTDVDVDSIKIAWESPQGQVSRYRVTYSSPEDGIHELFPAPDGDEDTAELHGLRPGSEYTVSVVALHGGMESQPLIGVQSTAIPAPTNLKFTQVSPTTLTAQWTAPSVKLTGYRVRVTPKEKTGPMKEINLSPDSTSVIVSGLMVATKYEVSVYALKDTLTSRPAQGVVTTLENVSPPRRARVTDATETTITISWRTKTETITGFQVDAIPANGQTPVQRTISPDVRSYTITGLQPGTDYKIHLYTLNDNARSSPVVIDASTAIDAPSNLRFLTTTPNSLLVSWQAPRARITGYIIKYEKPGSPPREVVPRPRPGVTEATITGLEPGTEYTIYVIALKNNQKSEPLIGRKKTDELPQLVTLPHPNLHGPEILDVPSTVQKTPFVTNPGYDTENGIQLPGTSHQQPSVGQQMIFEEHGFRRTTPPTAATPVRLRPRPYLPNVDEEVQIGHVPRGDVDYHLYPHVPGLNPNASTGQEALSQTTISWTPFQESSEYIISCQPVGTDEEPLQFQVPGTSTSATLTGLTRGVTYNIIVEALHNQRRHKVREEVVTVGNTVNEGLNQPTDDSCFDPYTVSHYAVGEEWERLSDSGFKLTCQCLGFGSGHFRCDSSKWCHDNGVNYKIGEKWDRQGENGQRMSCTCLGNGKGEFKCDPHEATCYDDGKTYHVGEQWQKEYLGAICSCTCFGGQRGWRCDNCRRPGAAEPSPDGTTGHTYNQYTQRYHQRTNTNVNCPIECFMPLDVQADRDDSRE</sequence>
<reference key="1">
    <citation type="journal article" date="1987" name="EMBO J.">
        <title>Multiple sites of alternative splicing of the rat fibronectin gene transcript.</title>
        <authorList>
            <person name="Scwarzbauer J.E."/>
            <person name="Patel R.S."/>
            <person name="Fonda D."/>
            <person name="Hynes R.O."/>
        </authorList>
    </citation>
    <scope>NUCLEOTIDE SEQUENCE [MRNA]</scope>
    <source>
        <strain>Fischer</strain>
        <tissue>Liver</tissue>
    </source>
</reference>
<reference key="2">
    <citation type="journal article" date="1987" name="EMBO J.">
        <title>Organization of the fibronectin gene provides evidence for exon shuffling during evolution.</title>
        <authorList>
            <person name="Patel R.S."/>
            <person name="Odermatt E."/>
            <person name="Schwarzbauer J.E."/>
            <person name="Hynes R.O."/>
        </authorList>
    </citation>
    <scope>NUCLEOTIDE SEQUENCE [GENOMIC DNA] OF 1-139 AND 2382-2477</scope>
    <source>
        <strain>Fischer</strain>
        <tissue>Liver</tissue>
    </source>
</reference>
<reference key="3">
    <citation type="journal article" date="1983" name="Cell">
        <title>Three different fibronectin mRNAs arise by alternative splicing within the coding region.</title>
        <authorList>
            <person name="Schwarzbauer J.E."/>
            <person name="Tamkun J.W."/>
            <person name="Lemischka I.R."/>
            <person name="Hynes R.O."/>
        </authorList>
    </citation>
    <scope>NUCLEOTIDE SEQUENCE [GENOMIC DNA] OF 1586-2477</scope>
</reference>
<reference key="4">
    <citation type="journal article" date="1985" name="Proc. Natl. Acad. Sci. U.S.A.">
        <title>Repeating modular structure of the fibronectin gene: relationship to protein structure and subunit variation.</title>
        <authorList>
            <person name="Odermatt E."/>
            <person name="Tamkun J.W."/>
            <person name="Hynes R.O."/>
        </authorList>
    </citation>
    <scope>NUCLEOTIDE SEQUENCE [GENOMIC DNA] OF 1722-1810</scope>
    <scope>ALTERNATIVE SPLICING</scope>
</reference>
<reference key="5">
    <citation type="journal article" date="1984" name="Proc. Natl. Acad. Sci. U.S.A.">
        <title>A single rat fibronectin gene generates three different mRNAs by alternative splicing of a complex exon.</title>
        <authorList>
            <person name="Tamkun J.W."/>
            <person name="Schwarzbauer J.E."/>
            <person name="Hynes R.O."/>
        </authorList>
    </citation>
    <scope>NUCLEOTIDE SEQUENCE [GENOMIC DNA] OF 2052-2237</scope>
    <scope>ALTERNATIVE SPLICING</scope>
</reference>
<reference key="6">
    <citation type="journal article" date="1994" name="Biochem. J.">
        <title>Isolation and characterization of fibronectin-alpha 1-microglobulin complex in rat plasma.</title>
        <authorList>
            <person name="Falkenberg C."/>
            <person name="Enghild J.J."/>
            <person name="Thoegersen I.B."/>
            <person name="Salvesen G."/>
            <person name="Aakerstroem B."/>
        </authorList>
    </citation>
    <scope>PROTEIN SEQUENCE OF 1183-1192; 1385-1399 AND 2287-2300</scope>
    <scope>INTERACTION WITH AMBP</scope>
</reference>
<reference key="7">
    <citation type="journal article" date="2012" name="Nat. Commun.">
        <title>Quantitative maps of protein phosphorylation sites across 14 different rat organs and tissues.</title>
        <authorList>
            <person name="Lundby A."/>
            <person name="Secher A."/>
            <person name="Lage K."/>
            <person name="Nordsborg N.B."/>
            <person name="Dmytriyev A."/>
            <person name="Lundby C."/>
            <person name="Olsen J.V."/>
        </authorList>
    </citation>
    <scope>PHOSPHORYLATION [LARGE SCALE ANALYSIS] AT SER-285 AND SER-2475</scope>
    <scope>IDENTIFICATION BY MASS SPECTROMETRY [LARGE SCALE ANALYSIS]</scope>
</reference>
<reference key="8">
    <citation type="journal article" date="2015" name="J. Proteome Res.">
        <title>Peptidomics for studying limited proteolysis.</title>
        <authorList>
            <person name="Tsuchiya T."/>
            <person name="Osaki T."/>
            <person name="Minamino N."/>
            <person name="Sasaki K."/>
        </authorList>
    </citation>
    <scope>CLEAVAGE OF SIGNAL PEPTIDE AFTER CYS-24</scope>
    <scope>IDENTIFICATION BY MASS SPECTROMETRY</scope>
</reference>
<feature type="signal peptide" evidence="10">
    <location>
        <begin position="1"/>
        <end position="24"/>
    </location>
</feature>
<feature type="chain" id="PRO_0000019237" description="Fibronectin">
    <location>
        <begin position="25"/>
        <end position="2477"/>
    </location>
</feature>
<feature type="chain" id="PRO_0000390481" description="Anastellin" evidence="1">
    <location>
        <begin position="627"/>
        <end position="701"/>
    </location>
</feature>
<feature type="domain" description="Fibronectin type-I 1" evidence="7">
    <location>
        <begin position="51"/>
        <end position="91"/>
    </location>
</feature>
<feature type="domain" description="Fibronectin type-I 2" evidence="7">
    <location>
        <begin position="96"/>
        <end position="139"/>
    </location>
</feature>
<feature type="domain" description="Fibronectin type-I 3" evidence="7">
    <location>
        <begin position="140"/>
        <end position="183"/>
    </location>
</feature>
<feature type="domain" description="Fibronectin type-I 4" evidence="7">
    <location>
        <begin position="185"/>
        <end position="229"/>
    </location>
</feature>
<feature type="domain" description="Fibronectin type-I 5" evidence="7">
    <location>
        <begin position="230"/>
        <end position="274"/>
    </location>
</feature>
<feature type="domain" description="Fibronectin type-I 6" evidence="7">
    <location>
        <begin position="306"/>
        <end position="345"/>
    </location>
</feature>
<feature type="domain" description="Fibronectin type-II 1" evidence="7 8">
    <location>
        <begin position="355"/>
        <end position="403"/>
    </location>
</feature>
<feature type="domain" description="Fibronectin type-II 2" evidence="7 8">
    <location>
        <begin position="415"/>
        <end position="463"/>
    </location>
</feature>
<feature type="domain" description="Fibronectin type-I 7" evidence="7">
    <location>
        <begin position="468"/>
        <end position="511"/>
    </location>
</feature>
<feature type="domain" description="Fibronectin type-I 8" evidence="7">
    <location>
        <begin position="516"/>
        <end position="558"/>
    </location>
</feature>
<feature type="domain" description="Fibronectin type-I 9" evidence="7">
    <location>
        <begin position="559"/>
        <end position="602"/>
    </location>
</feature>
<feature type="domain" description="Fibronectin type-III 1">
    <location>
        <begin position="610"/>
        <end position="717"/>
    </location>
</feature>
<feature type="domain" description="Fibronectin type-III 2" evidence="6 7 8">
    <location>
        <begin position="721"/>
        <end position="811"/>
    </location>
</feature>
<feature type="domain" description="Fibronectin type-III 3" evidence="6 7 8">
    <location>
        <begin position="812"/>
        <end position="901"/>
    </location>
</feature>
<feature type="domain" description="Fibronectin type-III 4" evidence="6 7 8">
    <location>
        <begin position="908"/>
        <end position="997"/>
    </location>
</feature>
<feature type="domain" description="Fibronectin type-III 5" evidence="6 7 8">
    <location>
        <begin position="998"/>
        <end position="1087"/>
    </location>
</feature>
<feature type="domain" description="Fibronectin type-III 6" evidence="6 7 8">
    <location>
        <begin position="1088"/>
        <end position="1174"/>
    </location>
</feature>
<feature type="domain" description="Fibronectin type-III 7" evidence="6 7 8">
    <location>
        <begin position="1175"/>
        <end position="1269"/>
    </location>
</feature>
<feature type="domain" description="Fibronectin type-III 8; extra domain B" evidence="6 7 8">
    <location>
        <begin position="1270"/>
        <end position="1358"/>
    </location>
</feature>
<feature type="domain" description="Fibronectin type-III 9" evidence="6 7 8">
    <location>
        <begin position="1359"/>
        <end position="1451"/>
    </location>
</feature>
<feature type="domain" description="Fibronectin type-III 10" evidence="6">
    <location>
        <begin position="1452"/>
        <end position="1539"/>
    </location>
</feature>
<feature type="domain" description="Fibronectin type-III 11" evidence="6">
    <location>
        <begin position="1540"/>
        <end position="1633"/>
    </location>
</feature>
<feature type="domain" description="Fibronectin type-III 12" evidence="6">
    <location>
        <begin position="1634"/>
        <end position="1725"/>
    </location>
</feature>
<feature type="domain" description="Fibronectin type-III 13; extra domain A" evidence="6 7 8">
    <location>
        <begin position="1726"/>
        <end position="1813"/>
    </location>
</feature>
<feature type="domain" description="Fibronectin type-III 14" evidence="6">
    <location>
        <begin position="1814"/>
        <end position="1907"/>
    </location>
</feature>
<feature type="domain" description="Fibronectin type-III 15" evidence="6">
    <location>
        <begin position="1908"/>
        <end position="1994"/>
    </location>
</feature>
<feature type="domain" description="Fibronectin type-III 16" evidence="6">
    <location>
        <begin position="1995"/>
        <end position="2085"/>
    </location>
</feature>
<feature type="domain" description="Fibronectin type-III 17" evidence="6">
    <location>
        <begin position="2193"/>
        <end position="2286"/>
    </location>
</feature>
<feature type="domain" description="Fibronectin type-I 10" evidence="7">
    <location>
        <begin position="2294"/>
        <end position="2338"/>
    </location>
</feature>
<feature type="domain" description="Fibronectin type-I 11" evidence="7">
    <location>
        <begin position="2339"/>
        <end position="2381"/>
    </location>
</feature>
<feature type="domain" description="Fibronectin type-I 12" evidence="7">
    <location>
        <begin position="2383"/>
        <end position="2426"/>
    </location>
</feature>
<feature type="DNA-binding region">
    <location>
        <begin position="906"/>
        <end position="1171"/>
    </location>
</feature>
<feature type="region of interest" description="Fibrin- and heparin-binding 1">
    <location>
        <begin position="53"/>
        <end position="273"/>
    </location>
</feature>
<feature type="region of interest" description="Collagen-binding">
    <location>
        <begin position="308"/>
        <end position="608"/>
    </location>
</feature>
<feature type="region of interest" description="Cell-attachment">
    <location>
        <begin position="1357"/>
        <end position="1630"/>
    </location>
</feature>
<feature type="region of interest" description="Disordered" evidence="9">
    <location>
        <begin position="1661"/>
        <end position="1685"/>
    </location>
</feature>
<feature type="region of interest" description="Heparin-binding 2">
    <location>
        <begin position="1811"/>
        <end position="2081"/>
    </location>
</feature>
<feature type="region of interest" description="V region (type III connecting segment, IIICS)">
    <location>
        <begin position="2082"/>
        <end position="2201"/>
    </location>
</feature>
<feature type="region of interest" description="Fibrin-binding 2">
    <location>
        <begin position="2296"/>
        <end position="2427"/>
    </location>
</feature>
<feature type="short sequence motif" description="Cell attachment site">
    <location>
        <begin position="1614"/>
        <end position="1616"/>
    </location>
</feature>
<feature type="short sequence motif" description="Cell attachment site">
    <location>
        <begin position="2181"/>
        <end position="2183"/>
    </location>
</feature>
<feature type="compositionally biased region" description="Polar residues" evidence="9">
    <location>
        <begin position="1675"/>
        <end position="1685"/>
    </location>
</feature>
<feature type="modified residue" description="Phosphoserine" evidence="13">
    <location>
        <position position="285"/>
    </location>
</feature>
<feature type="modified residue" description="Sulfotyrosine" evidence="5">
    <location>
        <position position="875"/>
    </location>
</feature>
<feature type="modified residue" description="Sulfotyrosine" evidence="5">
    <location>
        <position position="880"/>
    </location>
</feature>
<feature type="modified residue" description="Sulfotyrosine" evidence="5">
    <location>
        <position position="2392"/>
    </location>
</feature>
<feature type="modified residue" description="Phosphothreonine" evidence="2">
    <location>
        <position position="2454"/>
    </location>
</feature>
<feature type="modified residue" description="Phosphoserine" evidence="13">
    <location>
        <position position="2475"/>
    </location>
</feature>
<feature type="glycosylation site" description="N-linked (GlcNAc...) asparagine" evidence="5">
    <location>
        <position position="430"/>
    </location>
</feature>
<feature type="glycosylation site" description="N-linked (GlcNAc...) asparagine" evidence="5">
    <location>
        <position position="528"/>
    </location>
</feature>
<feature type="glycosylation site" description="N-linked (GlcNAc...) asparagine" evidence="5">
    <location>
        <position position="542"/>
    </location>
</feature>
<feature type="glycosylation site" description="N-linked (GlcNAc...) asparagine" evidence="5">
    <location>
        <position position="876"/>
    </location>
</feature>
<feature type="glycosylation site" description="N-linked (GlcNAc...) asparagine" evidence="5">
    <location>
        <position position="1006"/>
    </location>
</feature>
<feature type="glycosylation site" description="N-linked (GlcNAc...) asparagine" evidence="5">
    <location>
        <position position="1243"/>
    </location>
</feature>
<feature type="glycosylation site" description="N-linked (GlcNAc...) asparagine" evidence="5">
    <location>
        <position position="1290"/>
    </location>
</feature>
<feature type="glycosylation site" description="O-linked (GalNAc...) threonine" evidence="1">
    <location>
        <position position="2154"/>
    </location>
</feature>
<feature type="glycosylation site" description="N-linked (GlcNAc...) asparagine" evidence="5">
    <location>
        <position position="2198"/>
    </location>
</feature>
<feature type="disulfide bond" evidence="2">
    <location>
        <begin position="53"/>
        <end position="79"/>
    </location>
</feature>
<feature type="disulfide bond" evidence="2">
    <location>
        <begin position="77"/>
        <end position="88"/>
    </location>
</feature>
<feature type="disulfide bond" evidence="2">
    <location>
        <begin position="98"/>
        <end position="126"/>
    </location>
</feature>
<feature type="disulfide bond" evidence="2">
    <location>
        <begin position="124"/>
        <end position="136"/>
    </location>
</feature>
<feature type="disulfide bond" evidence="2">
    <location>
        <begin position="142"/>
        <end position="170"/>
    </location>
</feature>
<feature type="disulfide bond" evidence="2">
    <location>
        <begin position="168"/>
        <end position="180"/>
    </location>
</feature>
<feature type="disulfide bond" evidence="2">
    <location>
        <begin position="187"/>
        <end position="216"/>
    </location>
</feature>
<feature type="disulfide bond" evidence="2">
    <location>
        <begin position="214"/>
        <end position="226"/>
    </location>
</feature>
<feature type="disulfide bond" evidence="2">
    <location>
        <begin position="232"/>
        <end position="261"/>
    </location>
</feature>
<feature type="disulfide bond" evidence="2">
    <location>
        <begin position="259"/>
        <end position="271"/>
    </location>
</feature>
<feature type="disulfide bond" evidence="2">
    <location>
        <begin position="308"/>
        <end position="335"/>
    </location>
</feature>
<feature type="disulfide bond" evidence="2">
    <location>
        <begin position="333"/>
        <end position="342"/>
    </location>
</feature>
<feature type="disulfide bond" evidence="2">
    <location>
        <begin position="360"/>
        <end position="386"/>
    </location>
</feature>
<feature type="disulfide bond" evidence="2">
    <location>
        <begin position="374"/>
        <end position="401"/>
    </location>
</feature>
<feature type="disulfide bond" evidence="2">
    <location>
        <begin position="420"/>
        <end position="446"/>
    </location>
</feature>
<feature type="disulfide bond" evidence="2">
    <location>
        <begin position="434"/>
        <end position="461"/>
    </location>
</feature>
<feature type="disulfide bond" evidence="7">
    <location>
        <begin position="470"/>
        <end position="498"/>
    </location>
</feature>
<feature type="disulfide bond" evidence="7">
    <location>
        <begin position="496"/>
        <end position="508"/>
    </location>
</feature>
<feature type="disulfide bond" evidence="7">
    <location>
        <begin position="518"/>
        <end position="545"/>
    </location>
</feature>
<feature type="disulfide bond" evidence="7">
    <location>
        <begin position="543"/>
        <end position="555"/>
    </location>
</feature>
<feature type="disulfide bond" evidence="7">
    <location>
        <begin position="561"/>
        <end position="589"/>
    </location>
</feature>
<feature type="disulfide bond" evidence="7">
    <location>
        <begin position="587"/>
        <end position="599"/>
    </location>
</feature>
<feature type="disulfide bond" evidence="7">
    <location>
        <begin position="2296"/>
        <end position="2325"/>
    </location>
</feature>
<feature type="disulfide bond" evidence="7">
    <location>
        <begin position="2323"/>
        <end position="2335"/>
    </location>
</feature>
<feature type="disulfide bond" evidence="7">
    <location>
        <begin position="2341"/>
        <end position="2368"/>
    </location>
</feature>
<feature type="disulfide bond" evidence="7">
    <location>
        <begin position="2366"/>
        <end position="2378"/>
    </location>
</feature>
<feature type="disulfide bond" evidence="1">
    <location>
        <begin position="2385"/>
        <end position="2411"/>
    </location>
</feature>
<feature type="disulfide bond" evidence="1">
    <location>
        <begin position="2409"/>
        <end position="2420"/>
    </location>
</feature>
<feature type="disulfide bond" description="Interchain (with C-2462)">
    <location>
        <position position="2458"/>
    </location>
</feature>
<feature type="disulfide bond" description="Interchain (with C-2458)">
    <location>
        <position position="2462"/>
    </location>
</feature>
<feature type="cross-link" description="Isoglutamyl lysine isopeptide (Gln-Lys) (interchain with K-?)" evidence="4">
    <location>
        <position position="35"/>
    </location>
</feature>
<feature type="cross-link" description="Isoglutamyl lysine isopeptide (Gln-Lys) (interchain with K-?)" evidence="4">
    <location>
        <position position="36"/>
    </location>
</feature>
<feature type="cross-link" description="Isoglutamyl lysine isopeptide (Gln-Lys) (interchain with K-?)" evidence="4">
    <location>
        <position position="48"/>
    </location>
</feature>
<feature type="splice variant" id="VSP_003258" description="In isoform 2." evidence="11">
    <location>
        <begin position="1720"/>
        <end position="1809"/>
    </location>
</feature>
<feature type="splice variant" id="VSP_003260" description="In isoform 4." evidence="11">
    <location>
        <begin position="2082"/>
        <end position="2200"/>
    </location>
</feature>
<feature type="splice variant" id="VSP_003259" description="In isoform 3." evidence="11">
    <location>
        <begin position="2082"/>
        <end position="2106"/>
    </location>
</feature>
<feature type="sequence conflict" description="In Ref. 3; AAA41166/AAA41167/AAA41168." evidence="11" ref="3">
    <original>G</original>
    <variation>A</variation>
    <location>
        <position position="2318"/>
    </location>
</feature>
<gene>
    <name evidence="12" type="primary">Fn1</name>
</gene>
<evidence type="ECO:0000250" key="1"/>
<evidence type="ECO:0000250" key="2">
    <source>
        <dbReference type="UniProtKB" id="P02751"/>
    </source>
</evidence>
<evidence type="ECO:0000250" key="3">
    <source>
        <dbReference type="UniProtKB" id="P07589"/>
    </source>
</evidence>
<evidence type="ECO:0000250" key="4">
    <source>
        <dbReference type="UniProtKB" id="P11276"/>
    </source>
</evidence>
<evidence type="ECO:0000255" key="5"/>
<evidence type="ECO:0000255" key="6">
    <source>
        <dbReference type="PROSITE-ProRule" id="PRU00316"/>
    </source>
</evidence>
<evidence type="ECO:0000255" key="7">
    <source>
        <dbReference type="PROSITE-ProRule" id="PRU00478"/>
    </source>
</evidence>
<evidence type="ECO:0000255" key="8">
    <source>
        <dbReference type="PROSITE-ProRule" id="PRU00479"/>
    </source>
</evidence>
<evidence type="ECO:0000256" key="9">
    <source>
        <dbReference type="SAM" id="MobiDB-lite"/>
    </source>
</evidence>
<evidence type="ECO:0000269" key="10">
    <source>
    </source>
</evidence>
<evidence type="ECO:0000305" key="11"/>
<evidence type="ECO:0000312" key="12">
    <source>
        <dbReference type="RGD" id="2624"/>
    </source>
</evidence>
<evidence type="ECO:0007744" key="13">
    <source>
    </source>
</evidence>
<comment type="function">
    <text evidence="2 4">Fibronectins bind cell surfaces and various compounds including collagen, fibrin, heparin, DNA, and actin. Fibronectins are involved in cell adhesion, cell motility, opsonization, wound healing, and maintenance of cell shape (By similarity). Involved in osteoblast compaction through the fibronectin fibrillogenesis cell-mediated matrix assembly process, essential for osteoblast mineralization. Participates in the regulation of type I collagen deposition by osteoblasts (By similarity).</text>
</comment>
<comment type="function">
    <molecule>Anastellin</molecule>
    <text evidence="2">Binds fibronectin and induces fibril formation. This fibronectin polymer, named superfibronectin, exhibits enhanced adhesive properties. Both anastellin and superfibronectin inhibit tumor growth, angiogenesis and metastasis. Anastellin activates p38 MAPK and inhibits lysophospholipid signaling.</text>
</comment>
<comment type="function">
    <text evidence="4">Secreted by contracting muscle, induces liver autophagy, a degradative pathway for nutrient mobilization and damage removal, and systemic insulin sensitization via hepatic ITGA5:ITGB1 integrin receptor signaling.</text>
</comment>
<comment type="subunit">
    <text evidence="1 2 4">Mostly heterodimers or multimers of alternatively spliced variants, connected by 2 disulfide bonds near the carboxyl ends; to a lesser extent homodimers. Interacts with FBLN1, AMBP, TNR, LGALS3BP and COL13A1. Interacts with FBLN7 (By similarity). Interacts with COMP. Interacts (via type III repeats 9-14) with TNFAIP6 (via CUB domain); this interaction enhances fibronectin fibril assembly. TNFAIP6 may act as a bridging molecule between FN1 and THBS1 (By similarity). Interacts with TNR; the interaction inhibits cell adhesion and neurite outgrowth (By similarity). Interacts with FST3 and MYOC (By similarity). Interacts with SVEP1 (By similarity).</text>
</comment>
<comment type="interaction">
    <interactant intactId="EBI-6127274">
        <id>P04937</id>
    </interactant>
    <interactant intactId="EBI-1173182">
        <id>P34901</id>
        <label>Sdc4</label>
    </interactant>
    <organismsDiffer>false</organismsDiffer>
    <experiments>2</experiments>
</comment>
<comment type="subcellular location">
    <subcellularLocation>
        <location evidence="4">Secreted</location>
        <location evidence="4">Extracellular space</location>
        <location evidence="4">Extracellular matrix</location>
    </subcellularLocation>
    <subcellularLocation>
        <location evidence="4">Secreted</location>
    </subcellularLocation>
</comment>
<comment type="alternative products">
    <event type="alternative splicing"/>
    <isoform>
        <id>P04937-1</id>
        <name>1</name>
        <sequence type="displayed"/>
    </isoform>
    <isoform>
        <id>P04937-2</id>
        <name>2</name>
        <name>FNIII-13-less</name>
        <sequence type="described" ref="VSP_003258"/>
    </isoform>
    <isoform>
        <id>P04937-3</id>
        <name>3</name>
        <name>Lambda-RLF4-5</name>
        <sequence type="described" ref="VSP_003259"/>
    </isoform>
    <isoform>
        <id>P04937-4</id>
        <name>4</name>
        <name>Lambda-RLF6</name>
        <sequence type="described" ref="VSP_003260"/>
    </isoform>
    <text evidence="11">A number of isoforms are produced. The diversity of isoforms depends on the V region and either of the two extra domain which can be either included or excluded (partially or completely for the V region).</text>
</comment>
<comment type="PTM">
    <text evidence="2">Sulfated.</text>
</comment>
<comment type="PTM">
    <text evidence="4">Forms covalent cross-links mediated by a transglutaminase, such as F13A or TGM2, between a glutamine and the epsilon-amino group of a lysine residue, forming homopolymers and heteropolymers (e.g. fibrinogen-fibronectin, collagen-fibronectin heteropolymers).</text>
</comment>
<comment type="PTM">
    <text evidence="2">Phosphorylated by FAM20C in the extracellular medium.</text>
</comment>
<comment type="PTM">
    <text evidence="2">Proteolytic processing produces the C-terminal NC1 peptide, anastellin.</text>
</comment>
<comment type="PTM">
    <text evidence="4">Some lysine residues are oxidized to allysine by LOXL3, promoting fibronectin activation and matrix formation.</text>
</comment>
<comment type="PTM">
    <text evidence="3">Serotonylated on Gln residues by TGM2 in response to hypoxia.</text>
</comment>
<organism>
    <name type="scientific">Rattus norvegicus</name>
    <name type="common">Rat</name>
    <dbReference type="NCBI Taxonomy" id="10116"/>
    <lineage>
        <taxon>Eukaryota</taxon>
        <taxon>Metazoa</taxon>
        <taxon>Chordata</taxon>
        <taxon>Craniata</taxon>
        <taxon>Vertebrata</taxon>
        <taxon>Euteleostomi</taxon>
        <taxon>Mammalia</taxon>
        <taxon>Eutheria</taxon>
        <taxon>Euarchontoglires</taxon>
        <taxon>Glires</taxon>
        <taxon>Rodentia</taxon>
        <taxon>Myomorpha</taxon>
        <taxon>Muroidea</taxon>
        <taxon>Muridae</taxon>
        <taxon>Murinae</taxon>
        <taxon>Rattus</taxon>
    </lineage>
</organism>